<keyword id="KW-0066">ATP synthesis</keyword>
<keyword id="KW-1003">Cell membrane</keyword>
<keyword id="KW-0139">CF(1)</keyword>
<keyword id="KW-0375">Hydrogen ion transport</keyword>
<keyword id="KW-0406">Ion transport</keyword>
<keyword id="KW-0472">Membrane</keyword>
<keyword id="KW-0813">Transport</keyword>
<comment type="function">
    <text evidence="1">Produces ATP from ADP in the presence of a proton gradient across the membrane. The gamma chain is believed to be important in regulating ATPase activity and the flow of protons through the CF(0) complex.</text>
</comment>
<comment type="subunit">
    <text evidence="1">F-type ATPases have 2 components, CF(1) - the catalytic core - and CF(0) - the membrane proton channel. CF(1) has five subunits: alpha(3), beta(3), gamma(1), delta(1), epsilon(1). CF(0) has three main subunits: a, b and c.</text>
</comment>
<comment type="subcellular location">
    <subcellularLocation>
        <location evidence="1">Cell membrane</location>
        <topology evidence="1">Peripheral membrane protein</topology>
    </subcellularLocation>
</comment>
<comment type="similarity">
    <text evidence="1">Belongs to the ATPase gamma chain family.</text>
</comment>
<proteinExistence type="inferred from homology"/>
<sequence>MAAQVRVLRQRIRTAKSMKKITKAMELVATSRIAKAQDQVAASLPYARAITEVLTALASNARIDHPLLTPRERVRRAGVLLITSDRGLAGGYSTNAIKTAESLLARLRADGKEPALYVIGRKGVQFYRFRNRPIAASWTGFSEQPTFADAREVGQTLIKVFTAGVDDADGDPGPDGVFGVDELHIVSTEFKSLMTQRPVAKILGPMQVEDRPRAEGLLPAYEFEPEAEALLDALLPKYINTRIYAALVESAASESASRRRAMKSANDNAVEMIEKYTREMNSARQAGITQEISEIVGGANALAASGSEV</sequence>
<dbReference type="EMBL" id="CP000850">
    <property type="protein sequence ID" value="ABV99803.1"/>
    <property type="molecule type" value="Genomic_DNA"/>
</dbReference>
<dbReference type="SMR" id="A8M2J4"/>
<dbReference type="STRING" id="391037.Sare_4013"/>
<dbReference type="KEGG" id="saq:Sare_4013"/>
<dbReference type="PATRIC" id="fig|391037.6.peg.4050"/>
<dbReference type="eggNOG" id="COG0224">
    <property type="taxonomic scope" value="Bacteria"/>
</dbReference>
<dbReference type="HOGENOM" id="CLU_050669_0_0_11"/>
<dbReference type="OrthoDB" id="9812769at2"/>
<dbReference type="GO" id="GO:0005886">
    <property type="term" value="C:plasma membrane"/>
    <property type="evidence" value="ECO:0007669"/>
    <property type="project" value="UniProtKB-SubCell"/>
</dbReference>
<dbReference type="GO" id="GO:0045259">
    <property type="term" value="C:proton-transporting ATP synthase complex"/>
    <property type="evidence" value="ECO:0007669"/>
    <property type="project" value="UniProtKB-KW"/>
</dbReference>
<dbReference type="GO" id="GO:0005524">
    <property type="term" value="F:ATP binding"/>
    <property type="evidence" value="ECO:0007669"/>
    <property type="project" value="UniProtKB-UniRule"/>
</dbReference>
<dbReference type="GO" id="GO:0046933">
    <property type="term" value="F:proton-transporting ATP synthase activity, rotational mechanism"/>
    <property type="evidence" value="ECO:0007669"/>
    <property type="project" value="UniProtKB-UniRule"/>
</dbReference>
<dbReference type="GO" id="GO:0042777">
    <property type="term" value="P:proton motive force-driven plasma membrane ATP synthesis"/>
    <property type="evidence" value="ECO:0007669"/>
    <property type="project" value="UniProtKB-UniRule"/>
</dbReference>
<dbReference type="CDD" id="cd12151">
    <property type="entry name" value="F1-ATPase_gamma"/>
    <property type="match status" value="1"/>
</dbReference>
<dbReference type="Gene3D" id="3.40.1380.10">
    <property type="match status" value="1"/>
</dbReference>
<dbReference type="Gene3D" id="1.10.287.80">
    <property type="entry name" value="ATP synthase, gamma subunit, helix hairpin domain"/>
    <property type="match status" value="1"/>
</dbReference>
<dbReference type="HAMAP" id="MF_00815">
    <property type="entry name" value="ATP_synth_gamma_bact"/>
    <property type="match status" value="1"/>
</dbReference>
<dbReference type="InterPro" id="IPR035968">
    <property type="entry name" value="ATP_synth_F1_ATPase_gsu"/>
</dbReference>
<dbReference type="InterPro" id="IPR000131">
    <property type="entry name" value="ATP_synth_F1_gsu"/>
</dbReference>
<dbReference type="InterPro" id="IPR023632">
    <property type="entry name" value="ATP_synth_F1_gsu_CS"/>
</dbReference>
<dbReference type="NCBIfam" id="TIGR01146">
    <property type="entry name" value="ATPsyn_F1gamma"/>
    <property type="match status" value="1"/>
</dbReference>
<dbReference type="NCBIfam" id="NF004145">
    <property type="entry name" value="PRK05621.1-2"/>
    <property type="match status" value="1"/>
</dbReference>
<dbReference type="PANTHER" id="PTHR11693">
    <property type="entry name" value="ATP SYNTHASE GAMMA CHAIN"/>
    <property type="match status" value="1"/>
</dbReference>
<dbReference type="PANTHER" id="PTHR11693:SF22">
    <property type="entry name" value="ATP SYNTHASE SUBUNIT GAMMA, MITOCHONDRIAL"/>
    <property type="match status" value="1"/>
</dbReference>
<dbReference type="Pfam" id="PF00231">
    <property type="entry name" value="ATP-synt"/>
    <property type="match status" value="1"/>
</dbReference>
<dbReference type="PRINTS" id="PR00126">
    <property type="entry name" value="ATPASEGAMMA"/>
</dbReference>
<dbReference type="SUPFAM" id="SSF52943">
    <property type="entry name" value="ATP synthase (F1-ATPase), gamma subunit"/>
    <property type="match status" value="1"/>
</dbReference>
<dbReference type="PROSITE" id="PS00153">
    <property type="entry name" value="ATPASE_GAMMA"/>
    <property type="match status" value="1"/>
</dbReference>
<feature type="chain" id="PRO_1000083804" description="ATP synthase gamma chain">
    <location>
        <begin position="1"/>
        <end position="309"/>
    </location>
</feature>
<name>ATPG_SALAI</name>
<evidence type="ECO:0000255" key="1">
    <source>
        <dbReference type="HAMAP-Rule" id="MF_00815"/>
    </source>
</evidence>
<reference key="1">
    <citation type="submission" date="2007-10" db="EMBL/GenBank/DDBJ databases">
        <title>Complete sequence of Salinispora arenicola CNS-205.</title>
        <authorList>
            <consortium name="US DOE Joint Genome Institute"/>
            <person name="Copeland A."/>
            <person name="Lucas S."/>
            <person name="Lapidus A."/>
            <person name="Barry K."/>
            <person name="Glavina del Rio T."/>
            <person name="Dalin E."/>
            <person name="Tice H."/>
            <person name="Pitluck S."/>
            <person name="Foster B."/>
            <person name="Schmutz J."/>
            <person name="Larimer F."/>
            <person name="Land M."/>
            <person name="Hauser L."/>
            <person name="Kyrpides N."/>
            <person name="Ivanova N."/>
            <person name="Jensen P.R."/>
            <person name="Moore B.S."/>
            <person name="Penn K."/>
            <person name="Jenkins C."/>
            <person name="Udwary D."/>
            <person name="Xiang L."/>
            <person name="Gontang E."/>
            <person name="Richardson P."/>
        </authorList>
    </citation>
    <scope>NUCLEOTIDE SEQUENCE [LARGE SCALE GENOMIC DNA]</scope>
    <source>
        <strain>CNS-205</strain>
    </source>
</reference>
<gene>
    <name evidence="1" type="primary">atpG</name>
    <name type="ordered locus">Sare_4013</name>
</gene>
<accession>A8M2J4</accession>
<organism>
    <name type="scientific">Salinispora arenicola (strain CNS-205)</name>
    <dbReference type="NCBI Taxonomy" id="391037"/>
    <lineage>
        <taxon>Bacteria</taxon>
        <taxon>Bacillati</taxon>
        <taxon>Actinomycetota</taxon>
        <taxon>Actinomycetes</taxon>
        <taxon>Micromonosporales</taxon>
        <taxon>Micromonosporaceae</taxon>
        <taxon>Salinispora</taxon>
    </lineage>
</organism>
<protein>
    <recommendedName>
        <fullName evidence="1">ATP synthase gamma chain</fullName>
    </recommendedName>
    <alternativeName>
        <fullName evidence="1">ATP synthase F1 sector gamma subunit</fullName>
    </alternativeName>
    <alternativeName>
        <fullName evidence="1">F-ATPase gamma subunit</fullName>
    </alternativeName>
</protein>